<dbReference type="EC" id="2.7.1.24" evidence="1"/>
<dbReference type="EMBL" id="AE000520">
    <property type="protein sequence ID" value="AAC65285.1"/>
    <property type="molecule type" value="Genomic_DNA"/>
</dbReference>
<dbReference type="PIR" id="B71341">
    <property type="entry name" value="B71341"/>
</dbReference>
<dbReference type="RefSeq" id="WP_010881745.1">
    <property type="nucleotide sequence ID" value="NC_021490.2"/>
</dbReference>
<dbReference type="SMR" id="O83319"/>
<dbReference type="IntAct" id="O83319">
    <property type="interactions" value="4"/>
</dbReference>
<dbReference type="STRING" id="243276.TP_0296"/>
<dbReference type="EnsemblBacteria" id="AAC65285">
    <property type="protein sequence ID" value="AAC65285"/>
    <property type="gene ID" value="TP_0296"/>
</dbReference>
<dbReference type="KEGG" id="tpa:TP_0296"/>
<dbReference type="KEGG" id="tpw:TPANIC_0296"/>
<dbReference type="eggNOG" id="COG0237">
    <property type="taxonomic scope" value="Bacteria"/>
</dbReference>
<dbReference type="HOGENOM" id="CLU_057180_2_2_12"/>
<dbReference type="OrthoDB" id="359604at2"/>
<dbReference type="UniPathway" id="UPA00241">
    <property type="reaction ID" value="UER00356"/>
</dbReference>
<dbReference type="Proteomes" id="UP000000811">
    <property type="component" value="Chromosome"/>
</dbReference>
<dbReference type="GO" id="GO:0005737">
    <property type="term" value="C:cytoplasm"/>
    <property type="evidence" value="ECO:0007669"/>
    <property type="project" value="UniProtKB-SubCell"/>
</dbReference>
<dbReference type="GO" id="GO:0005524">
    <property type="term" value="F:ATP binding"/>
    <property type="evidence" value="ECO:0007669"/>
    <property type="project" value="UniProtKB-UniRule"/>
</dbReference>
<dbReference type="GO" id="GO:0004140">
    <property type="term" value="F:dephospho-CoA kinase activity"/>
    <property type="evidence" value="ECO:0007669"/>
    <property type="project" value="UniProtKB-UniRule"/>
</dbReference>
<dbReference type="GO" id="GO:0015937">
    <property type="term" value="P:coenzyme A biosynthetic process"/>
    <property type="evidence" value="ECO:0007669"/>
    <property type="project" value="UniProtKB-UniRule"/>
</dbReference>
<dbReference type="CDD" id="cd02022">
    <property type="entry name" value="DPCK"/>
    <property type="match status" value="1"/>
</dbReference>
<dbReference type="Gene3D" id="3.40.50.300">
    <property type="entry name" value="P-loop containing nucleotide triphosphate hydrolases"/>
    <property type="match status" value="1"/>
</dbReference>
<dbReference type="HAMAP" id="MF_00376">
    <property type="entry name" value="Dephospho_CoA_kinase"/>
    <property type="match status" value="1"/>
</dbReference>
<dbReference type="InterPro" id="IPR001977">
    <property type="entry name" value="Depp_CoAkinase"/>
</dbReference>
<dbReference type="InterPro" id="IPR027417">
    <property type="entry name" value="P-loop_NTPase"/>
</dbReference>
<dbReference type="Pfam" id="PF01121">
    <property type="entry name" value="CoaE"/>
    <property type="match status" value="1"/>
</dbReference>
<dbReference type="SUPFAM" id="SSF52540">
    <property type="entry name" value="P-loop containing nucleoside triphosphate hydrolases"/>
    <property type="match status" value="1"/>
</dbReference>
<dbReference type="PROSITE" id="PS51219">
    <property type="entry name" value="DPCK"/>
    <property type="match status" value="1"/>
</dbReference>
<protein>
    <recommendedName>
        <fullName evidence="1">Dephospho-CoA kinase</fullName>
        <ecNumber evidence="1">2.7.1.24</ecNumber>
    </recommendedName>
    <alternativeName>
        <fullName evidence="1">Dephosphocoenzyme A kinase</fullName>
    </alternativeName>
</protein>
<evidence type="ECO:0000255" key="1">
    <source>
        <dbReference type="HAMAP-Rule" id="MF_00376"/>
    </source>
</evidence>
<evidence type="ECO:0000305" key="2"/>
<name>COAE_TREPA</name>
<proteinExistence type="inferred from homology"/>
<gene>
    <name evidence="1" type="primary">coaE</name>
    <name type="ordered locus">TP_0296</name>
</gene>
<keyword id="KW-0067">ATP-binding</keyword>
<keyword id="KW-0173">Coenzyme A biosynthesis</keyword>
<keyword id="KW-0963">Cytoplasm</keyword>
<keyword id="KW-0418">Kinase</keyword>
<keyword id="KW-0547">Nucleotide-binding</keyword>
<keyword id="KW-1185">Reference proteome</keyword>
<keyword id="KW-0808">Transferase</keyword>
<sequence>MREFCPLIGVIGRSGAGKNVVSRLLAERGCYCIDADARTRELLESYGDSIVERFQVAAAARGLSLRRKDGGLHSAHLGVLLFSEPKLLQQHEEFLLPKVTRLLCEDIARAQAARPKAIVLNAPTLHKTELLQACSFVLYIWAPSILRMWRCKKRERVSFTHLLRRFSAQKGFYAQSIAQNADTYTVANCGRVASLARKVDCILTRRGVLGE</sequence>
<feature type="chain" id="PRO_0000173026" description="Dephospho-CoA kinase">
    <location>
        <begin position="1"/>
        <end position="211"/>
    </location>
</feature>
<feature type="domain" description="DPCK" evidence="1">
    <location>
        <begin position="7"/>
        <end position="211"/>
    </location>
</feature>
<feature type="binding site" evidence="1">
    <location>
        <begin position="15"/>
        <end position="20"/>
    </location>
    <ligand>
        <name>ATP</name>
        <dbReference type="ChEBI" id="CHEBI:30616"/>
    </ligand>
</feature>
<accession>O83319</accession>
<organism>
    <name type="scientific">Treponema pallidum (strain Nichols)</name>
    <dbReference type="NCBI Taxonomy" id="243276"/>
    <lineage>
        <taxon>Bacteria</taxon>
        <taxon>Pseudomonadati</taxon>
        <taxon>Spirochaetota</taxon>
        <taxon>Spirochaetia</taxon>
        <taxon>Spirochaetales</taxon>
        <taxon>Treponemataceae</taxon>
        <taxon>Treponema</taxon>
    </lineage>
</organism>
<comment type="function">
    <text evidence="1">Catalyzes the phosphorylation of the 3'-hydroxyl group of dephosphocoenzyme A to form coenzyme A.</text>
</comment>
<comment type="catalytic activity">
    <reaction evidence="1">
        <text>3'-dephospho-CoA + ATP = ADP + CoA + H(+)</text>
        <dbReference type="Rhea" id="RHEA:18245"/>
        <dbReference type="ChEBI" id="CHEBI:15378"/>
        <dbReference type="ChEBI" id="CHEBI:30616"/>
        <dbReference type="ChEBI" id="CHEBI:57287"/>
        <dbReference type="ChEBI" id="CHEBI:57328"/>
        <dbReference type="ChEBI" id="CHEBI:456216"/>
        <dbReference type="EC" id="2.7.1.24"/>
    </reaction>
</comment>
<comment type="pathway">
    <text evidence="1">Cofactor biosynthesis; coenzyme A biosynthesis; CoA from (R)-pantothenate: step 5/5.</text>
</comment>
<comment type="subcellular location">
    <subcellularLocation>
        <location evidence="1">Cytoplasm</location>
    </subcellularLocation>
</comment>
<comment type="similarity">
    <text evidence="1 2">Belongs to the CoaE family.</text>
</comment>
<reference key="1">
    <citation type="journal article" date="1998" name="Science">
        <title>Complete genome sequence of Treponema pallidum, the syphilis spirochete.</title>
        <authorList>
            <person name="Fraser C.M."/>
            <person name="Norris S.J."/>
            <person name="Weinstock G.M."/>
            <person name="White O."/>
            <person name="Sutton G.G."/>
            <person name="Dodson R.J."/>
            <person name="Gwinn M.L."/>
            <person name="Hickey E.K."/>
            <person name="Clayton R.A."/>
            <person name="Ketchum K.A."/>
            <person name="Sodergren E."/>
            <person name="Hardham J.M."/>
            <person name="McLeod M.P."/>
            <person name="Salzberg S.L."/>
            <person name="Peterson J.D."/>
            <person name="Khalak H.G."/>
            <person name="Richardson D.L."/>
            <person name="Howell J.K."/>
            <person name="Chidambaram M."/>
            <person name="Utterback T.R."/>
            <person name="McDonald L.A."/>
            <person name="Artiach P."/>
            <person name="Bowman C."/>
            <person name="Cotton M.D."/>
            <person name="Fujii C."/>
            <person name="Garland S.A."/>
            <person name="Hatch B."/>
            <person name="Horst K."/>
            <person name="Roberts K.M."/>
            <person name="Sandusky M."/>
            <person name="Weidman J.F."/>
            <person name="Smith H.O."/>
            <person name="Venter J.C."/>
        </authorList>
    </citation>
    <scope>NUCLEOTIDE SEQUENCE [LARGE SCALE GENOMIC DNA]</scope>
    <source>
        <strain>Nichols</strain>
    </source>
</reference>